<keyword id="KW-1003">Cell membrane</keyword>
<keyword id="KW-0472">Membrane</keyword>
<keyword id="KW-1185">Reference proteome</keyword>
<keyword id="KW-0812">Transmembrane</keyword>
<keyword id="KW-1133">Transmembrane helix</keyword>
<reference key="1">
    <citation type="journal article" date="1997" name="Nature">
        <title>The complete genome sequence of the hyperthermophilic, sulphate-reducing archaeon Archaeoglobus fulgidus.</title>
        <authorList>
            <person name="Klenk H.-P."/>
            <person name="Clayton R.A."/>
            <person name="Tomb J.-F."/>
            <person name="White O."/>
            <person name="Nelson K.E."/>
            <person name="Ketchum K.A."/>
            <person name="Dodson R.J."/>
            <person name="Gwinn M.L."/>
            <person name="Hickey E.K."/>
            <person name="Peterson J.D."/>
            <person name="Richardson D.L."/>
            <person name="Kerlavage A.R."/>
            <person name="Graham D.E."/>
            <person name="Kyrpides N.C."/>
            <person name="Fleischmann R.D."/>
            <person name="Quackenbush J."/>
            <person name="Lee N.H."/>
            <person name="Sutton G.G."/>
            <person name="Gill S.R."/>
            <person name="Kirkness E.F."/>
            <person name="Dougherty B.A."/>
            <person name="McKenney K."/>
            <person name="Adams M.D."/>
            <person name="Loftus B.J."/>
            <person name="Peterson S.N."/>
            <person name="Reich C.I."/>
            <person name="McNeil L.K."/>
            <person name="Badger J.H."/>
            <person name="Glodek A."/>
            <person name="Zhou L."/>
            <person name="Overbeek R."/>
            <person name="Gocayne J.D."/>
            <person name="Weidman J.F."/>
            <person name="McDonald L.A."/>
            <person name="Utterback T.R."/>
            <person name="Cotton M.D."/>
            <person name="Spriggs T."/>
            <person name="Artiach P."/>
            <person name="Kaine B.P."/>
            <person name="Sykes S.M."/>
            <person name="Sadow P.W."/>
            <person name="D'Andrea K.P."/>
            <person name="Bowman C."/>
            <person name="Fujii C."/>
            <person name="Garland S.A."/>
            <person name="Mason T.M."/>
            <person name="Olsen G.J."/>
            <person name="Fraser C.M."/>
            <person name="Smith H.O."/>
            <person name="Woese C.R."/>
            <person name="Venter J.C."/>
        </authorList>
    </citation>
    <scope>NUCLEOTIDE SEQUENCE [LARGE SCALE GENOMIC DNA]</scope>
    <source>
        <strain>ATCC 49558 / DSM 4304 / JCM 9628 / NBRC 100126 / VC-16</strain>
    </source>
</reference>
<protein>
    <recommendedName>
        <fullName>Uncharacterized protein AF_0123</fullName>
    </recommendedName>
</protein>
<dbReference type="EMBL" id="AE000782">
    <property type="protein sequence ID" value="AAB91119.1"/>
    <property type="molecule type" value="Genomic_DNA"/>
</dbReference>
<dbReference type="PIR" id="C69265">
    <property type="entry name" value="C69265"/>
</dbReference>
<dbReference type="STRING" id="224325.AF_0123"/>
<dbReference type="PaxDb" id="224325-AF_0123"/>
<dbReference type="EnsemblBacteria" id="AAB91119">
    <property type="protein sequence ID" value="AAB91119"/>
    <property type="gene ID" value="AF_0123"/>
</dbReference>
<dbReference type="KEGG" id="afu:AF_0123"/>
<dbReference type="eggNOG" id="arCOG12210">
    <property type="taxonomic scope" value="Archaea"/>
</dbReference>
<dbReference type="HOGENOM" id="CLU_1880936_0_0_2"/>
<dbReference type="Proteomes" id="UP000002199">
    <property type="component" value="Chromosome"/>
</dbReference>
<dbReference type="GO" id="GO:0005886">
    <property type="term" value="C:plasma membrane"/>
    <property type="evidence" value="ECO:0007669"/>
    <property type="project" value="UniProtKB-SubCell"/>
</dbReference>
<proteinExistence type="predicted"/>
<gene>
    <name type="ordered locus">AF_0123</name>
</gene>
<comment type="subcellular location">
    <subcellularLocation>
        <location evidence="2">Cell membrane</location>
        <topology evidence="2">Multi-pass membrane protein</topology>
    </subcellularLocation>
</comment>
<evidence type="ECO:0000255" key="1"/>
<evidence type="ECO:0000305" key="2"/>
<name>Y123_ARCFU</name>
<feature type="chain" id="PRO_0000127833" description="Uncharacterized protein AF_0123">
    <location>
        <begin position="1"/>
        <end position="135"/>
    </location>
</feature>
<feature type="transmembrane region" description="Helical" evidence="1">
    <location>
        <begin position="13"/>
        <end position="35"/>
    </location>
</feature>
<feature type="transmembrane region" description="Helical" evidence="1">
    <location>
        <begin position="82"/>
        <end position="101"/>
    </location>
</feature>
<feature type="transmembrane region" description="Helical" evidence="1">
    <location>
        <begin position="108"/>
        <end position="130"/>
    </location>
</feature>
<organism>
    <name type="scientific">Archaeoglobus fulgidus (strain ATCC 49558 / DSM 4304 / JCM 9628 / NBRC 100126 / VC-16)</name>
    <dbReference type="NCBI Taxonomy" id="224325"/>
    <lineage>
        <taxon>Archaea</taxon>
        <taxon>Methanobacteriati</taxon>
        <taxon>Methanobacteriota</taxon>
        <taxon>Archaeoglobi</taxon>
        <taxon>Archaeoglobales</taxon>
        <taxon>Archaeoglobaceae</taxon>
        <taxon>Archaeoglobus</taxon>
    </lineage>
</organism>
<accession>O30114</accession>
<sequence length="135" mass="15164">MNVEVGEECIRFAKVIRYFTLAGLILLVVSSAMYLLDIDPFVEPDRVVETWHLPASEFWKVNVGKEMESYSEFLYIAHPDNVAVFSLFFLALAPVFALLSILPKMKGIYRILTILVVAELLFGAVRPLILGAIGE</sequence>